<sequence>MAKNNTNRHYSLRKLKKGTASVAVALSVIGAGLVVNTNEVSARVFPRGTVENPDKARELLNKYDVENSMLQANNDKLTTENNNLTDQNKNLTTENKNLTDQNKNLTTENKNLTDQNKNLTTENKELKAEENRLTTENKGLTKKLSEAEEEAANKERENKEAIGTLKKTLDETVKDKIAKEQESKETIGTLKKTLDETVKDKIAKEQESKETIGTLKKTLDETVKDKIAKEQESKETIGTLKKILDETVKDKIAREQKSKQDIGALKQELAKKDEGNKVSEASRKGLRRDLDASREAKKQVEKDLANLTAELDKVKEEKQISDASRQGLRRDLDASREAKKQVEKALEEANSKLAALEKLNKELEESKKLTEKEKAELQAKLEAEAKALKEQLAKQAEELAKLRAGKASDSQTPDAKPGNKVVPGKGQAPQAGTKPNQNKAPMKETKRQLPSTGETANPFFTAAALTVMATAGVAAVVKRKEEN</sequence>
<reference key="1">
    <citation type="journal article" date="1986" name="J. Biol. Chem.">
        <title>Complete nucleotide sequence of type 6 M protein of the group A Streptococcus. Repetitive structure and membrane anchor.</title>
        <authorList>
            <person name="Hollingshead S.K."/>
            <person name="Fischetti V.F."/>
            <person name="Scott J.R."/>
        </authorList>
    </citation>
    <scope>NUCLEOTIDE SEQUENCE [GENOMIC DNA]</scope>
</reference>
<reference key="2">
    <citation type="journal article" date="1985" name="Proc. Natl. Acad. Sci. U.S.A.">
        <title>Relationship of M protein genes in group A streptococci.</title>
        <authorList>
            <person name="Scott J.R."/>
            <person name="Pulliam W.M."/>
            <person name="Hollingshead S.K."/>
            <person name="Fischetti V.A."/>
        </authorList>
    </citation>
    <scope>NUCLEOTIDE SEQUENCE [GENOMIC DNA] OF 43-122</scope>
</reference>
<reference key="3">
    <citation type="journal article" date="1995" name="Proc. Natl. Acad. Sci. U.S.A.">
        <title>Membrane cofactor protein (CD46) is a keratinocyte receptor for the M protein of the group A streptococcus.</title>
        <authorList>
            <person name="Okada N."/>
            <person name="Liszewski M.K."/>
            <person name="Atkinson J.P."/>
            <person name="Caparon M."/>
        </authorList>
    </citation>
    <scope>INTERACTION WITH HUMAN CD46</scope>
    <source>
        <strain>JRS4 / Serotype M6</strain>
    </source>
</reference>
<reference key="4">
    <citation type="journal article" date="2002" name="J. Immunol.">
        <title>Identification of the streptococcal M protein binding site on membrane cofactor protein (CD46).</title>
        <authorList>
            <person name="Giannakis E."/>
            <person name="Jokiranta T.S."/>
            <person name="Ormsby R.J."/>
            <person name="Duthy T.G."/>
            <person name="Male D.A."/>
            <person name="Christiansen D."/>
            <person name="Fischetti V.A."/>
            <person name="Bagley C."/>
            <person name="Loveland B.E."/>
            <person name="Gordon D.L."/>
        </authorList>
    </citation>
    <scope>INTERACTION WITH HUMAN CD46</scope>
    <source>
        <strain>JRS4 / Serotype M6</strain>
    </source>
</reference>
<reference key="5">
    <citation type="journal article" date="1995" name="Infect. Immun.">
        <title>Location of the complement factor H binding site on streptococcal M6 protein.</title>
        <authorList>
            <person name="Fischetti V.A."/>
            <person name="Horstmann R.D."/>
            <person name="Pancholi V."/>
        </authorList>
    </citation>
    <scope>INTERACTION WITH HUMAN FACTOR H</scope>
</reference>
<gene>
    <name type="primary">emm6</name>
</gene>
<comment type="function">
    <text>Mediates the attachment of S.pyogenes to skin epithelial cells through the binding of the human membrane cofactor protein CD46. Also binds to the factor H and factor H-like protein 1. These interactions could contribute to the fact that the M6 protein protects the bacterium from the phagocytosis by regulating the complement activation on the bacterial surface.</text>
</comment>
<comment type="subcellular location">
    <subcellularLocation>
        <location evidence="2">Secreted</location>
        <location evidence="2">Cell wall</location>
        <topology evidence="2">Peptidoglycan-anchor</topology>
    </subcellularLocation>
</comment>
<comment type="similarity">
    <text evidence="6">Belongs to the M protein family.</text>
</comment>
<protein>
    <recommendedName>
        <fullName>M protein, serotype 6</fullName>
    </recommendedName>
</protein>
<dbReference type="EMBL" id="M11338">
    <property type="protein sequence ID" value="AAA26920.1"/>
    <property type="molecule type" value="Genomic_DNA"/>
</dbReference>
<dbReference type="PIR" id="A26297">
    <property type="entry name" value="A26297"/>
</dbReference>
<dbReference type="SMR" id="P08089"/>
<dbReference type="PATRIC" id="fig|1314.199.peg.1662"/>
<dbReference type="GO" id="GO:0005576">
    <property type="term" value="C:extracellular region"/>
    <property type="evidence" value="ECO:0007669"/>
    <property type="project" value="UniProtKB-KW"/>
</dbReference>
<dbReference type="GO" id="GO:0006909">
    <property type="term" value="P:phagocytosis"/>
    <property type="evidence" value="ECO:0007669"/>
    <property type="project" value="UniProtKB-KW"/>
</dbReference>
<dbReference type="Gene3D" id="6.10.250.460">
    <property type="match status" value="2"/>
</dbReference>
<dbReference type="InterPro" id="IPR019931">
    <property type="entry name" value="LPXTG_anchor"/>
</dbReference>
<dbReference type="InterPro" id="IPR019950">
    <property type="entry name" value="M_anchor"/>
</dbReference>
<dbReference type="InterPro" id="IPR049896">
    <property type="entry name" value="SMCR"/>
</dbReference>
<dbReference type="InterPro" id="IPR049895">
    <property type="entry name" value="SMDRR"/>
</dbReference>
<dbReference type="InterPro" id="IPR005877">
    <property type="entry name" value="YSIRK_signal_dom"/>
</dbReference>
<dbReference type="NCBIfam" id="TIGR01167">
    <property type="entry name" value="LPXTG_anchor"/>
    <property type="match status" value="1"/>
</dbReference>
<dbReference type="NCBIfam" id="NF033777">
    <property type="entry name" value="M_group_A_cterm"/>
    <property type="match status" value="1"/>
</dbReference>
<dbReference type="NCBIfam" id="TIGR01168">
    <property type="entry name" value="YSIRK_signal"/>
    <property type="match status" value="1"/>
</dbReference>
<dbReference type="Pfam" id="PF00746">
    <property type="entry name" value="Gram_pos_anchor"/>
    <property type="match status" value="1"/>
</dbReference>
<dbReference type="Pfam" id="PF04650">
    <property type="entry name" value="YSIRK_signal"/>
    <property type="match status" value="1"/>
</dbReference>
<dbReference type="PRINTS" id="PR00015">
    <property type="entry name" value="GPOSANCHOR"/>
</dbReference>
<dbReference type="PROSITE" id="PS50847">
    <property type="entry name" value="GRAM_POS_ANCHORING"/>
    <property type="match status" value="1"/>
</dbReference>
<dbReference type="PROSITE" id="PS52028">
    <property type="entry name" value="SMCR"/>
    <property type="match status" value="2"/>
</dbReference>
<dbReference type="PROSITE" id="PS52030">
    <property type="entry name" value="SMDRR"/>
    <property type="match status" value="1"/>
</dbReference>
<evidence type="ECO:0000255" key="1"/>
<evidence type="ECO:0000255" key="2">
    <source>
        <dbReference type="PROSITE-ProRule" id="PRU00477"/>
    </source>
</evidence>
<evidence type="ECO:0000255" key="3">
    <source>
        <dbReference type="PROSITE-ProRule" id="PRU01372"/>
    </source>
</evidence>
<evidence type="ECO:0000255" key="4">
    <source>
        <dbReference type="PROSITE-ProRule" id="PRU01374"/>
    </source>
</evidence>
<evidence type="ECO:0000256" key="5">
    <source>
        <dbReference type="SAM" id="MobiDB-lite"/>
    </source>
</evidence>
<evidence type="ECO:0000305" key="6"/>
<organism>
    <name type="scientific">Streptococcus pyogenes</name>
    <dbReference type="NCBI Taxonomy" id="1314"/>
    <lineage>
        <taxon>Bacteria</taxon>
        <taxon>Bacillati</taxon>
        <taxon>Bacillota</taxon>
        <taxon>Bacilli</taxon>
        <taxon>Lactobacillales</taxon>
        <taxon>Streptococcaceae</taxon>
        <taxon>Streptococcus</taxon>
    </lineage>
</organism>
<accession>P08089</accession>
<feature type="signal peptide">
    <location>
        <begin position="1"/>
        <end position="42"/>
    </location>
</feature>
<feature type="chain" id="PRO_0000005619" description="M protein, serotype 6">
    <location>
        <begin position="43"/>
        <end position="452"/>
    </location>
</feature>
<feature type="propeptide" id="PRO_0000005620" description="Removed by sortase" evidence="2">
    <location>
        <begin position="453"/>
        <end position="483"/>
    </location>
</feature>
<feature type="repeat" description="1-1">
    <location>
        <begin position="69"/>
        <end position="75"/>
    </location>
</feature>
<feature type="repeat" description="2-1">
    <location>
        <begin position="76"/>
        <end position="82"/>
    </location>
</feature>
<feature type="repeat" description="3-1">
    <location>
        <begin position="83"/>
        <end position="89"/>
    </location>
</feature>
<feature type="repeat" description="4-1">
    <location>
        <begin position="90"/>
        <end position="96"/>
    </location>
</feature>
<feature type="repeat" description="5-1">
    <location>
        <begin position="97"/>
        <end position="103"/>
    </location>
</feature>
<feature type="repeat" description="6-1">
    <location>
        <begin position="104"/>
        <end position="110"/>
    </location>
</feature>
<feature type="repeat" description="7-1">
    <location>
        <begin position="111"/>
        <end position="117"/>
    </location>
</feature>
<feature type="repeat" description="8-1">
    <location>
        <begin position="118"/>
        <end position="124"/>
    </location>
</feature>
<feature type="repeat" description="9-1; approximate">
    <location>
        <begin position="125"/>
        <end position="131"/>
    </location>
</feature>
<feature type="repeat" description="10-1">
    <location>
        <begin position="132"/>
        <end position="138"/>
    </location>
</feature>
<feature type="repeat" description="1-2">
    <location>
        <begin position="157"/>
        <end position="181"/>
    </location>
</feature>
<feature type="repeat" description="2-2">
    <location>
        <begin position="182"/>
        <end position="206"/>
    </location>
</feature>
<feature type="repeat" description="3-2">
    <location>
        <begin position="207"/>
        <end position="231"/>
    </location>
</feature>
<feature type="repeat" description="4-2">
    <location>
        <begin position="232"/>
        <end position="256"/>
    </location>
</feature>
<feature type="repeat" description="5-2; truncated">
    <location>
        <begin position="257"/>
        <end position="269"/>
    </location>
</feature>
<feature type="repeat" description="C 1" evidence="3">
    <location>
        <begin position="270"/>
        <end position="304"/>
    </location>
</feature>
<feature type="repeat" description="C 2" evidence="3">
    <location>
        <begin position="312"/>
        <end position="346"/>
    </location>
</feature>
<feature type="repeat" description="D 1" evidence="4">
    <location>
        <begin position="379"/>
        <end position="384"/>
    </location>
</feature>
<feature type="repeat" description="D 2" evidence="4">
    <location>
        <begin position="385"/>
        <end position="390"/>
    </location>
</feature>
<feature type="repeat" description="D 3" evidence="4">
    <location>
        <begin position="393"/>
        <end position="398"/>
    </location>
</feature>
<feature type="repeat" description="D 4" evidence="4">
    <location>
        <begin position="400"/>
        <end position="405"/>
    </location>
</feature>
<feature type="region of interest" description="10 X 7 AA approximate tandem repeats of [KMNR]-L-[TQ]-[TDA]-[ENQ]-N-[NDK]">
    <location>
        <begin position="69"/>
        <end position="138"/>
    </location>
</feature>
<feature type="region of interest" description="Disordered" evidence="5">
    <location>
        <begin position="74"/>
        <end position="157"/>
    </location>
</feature>
<feature type="region of interest" description="4.5 X 25 AA tandem repeats of E-[NS]-K-E-[TA]-I-G-T-L-K-K-[TI]-L-D-E-T-V-K-D-K-I-A-[KR]-E-Q">
    <location>
        <begin position="157"/>
        <end position="269"/>
    </location>
</feature>
<feature type="region of interest" description="Disordered" evidence="5">
    <location>
        <begin position="255"/>
        <end position="298"/>
    </location>
</feature>
<feature type="region of interest" description="Binding to CD46">
    <location>
        <begin position="279"/>
        <end position="347"/>
    </location>
</feature>
<feature type="region of interest" description="Two directly repeated 27 amino acid blocks separated by 15 amino acids">
    <location>
        <begin position="279"/>
        <end position="347"/>
    </location>
</feature>
<feature type="region of interest" description="Disordered" evidence="5">
    <location>
        <begin position="314"/>
        <end position="345"/>
    </location>
</feature>
<feature type="region of interest" description="Hydrophilic">
    <location>
        <begin position="348"/>
        <end position="411"/>
    </location>
</feature>
<feature type="region of interest" description="Disordered" evidence="5">
    <location>
        <begin position="400"/>
        <end position="455"/>
    </location>
</feature>
<feature type="coiled-coil region" evidence="1">
    <location>
        <begin position="54"/>
        <end position="171"/>
    </location>
</feature>
<feature type="coiled-coil region" evidence="1">
    <location>
        <begin position="280"/>
        <end position="408"/>
    </location>
</feature>
<feature type="short sequence motif" description="LPXTG sorting signal" evidence="2">
    <location>
        <begin position="449"/>
        <end position="453"/>
    </location>
</feature>
<feature type="compositionally biased region" description="Polar residues" evidence="5">
    <location>
        <begin position="74"/>
        <end position="87"/>
    </location>
</feature>
<feature type="compositionally biased region" description="Low complexity" evidence="5">
    <location>
        <begin position="88"/>
        <end position="113"/>
    </location>
</feature>
<feature type="compositionally biased region" description="Basic and acidic residues" evidence="5">
    <location>
        <begin position="122"/>
        <end position="135"/>
    </location>
</feature>
<feature type="compositionally biased region" description="Basic and acidic residues" evidence="5">
    <location>
        <begin position="143"/>
        <end position="157"/>
    </location>
</feature>
<feature type="compositionally biased region" description="Basic and acidic residues" evidence="5">
    <location>
        <begin position="268"/>
        <end position="298"/>
    </location>
</feature>
<feature type="compositionally biased region" description="Basic and acidic residues" evidence="5">
    <location>
        <begin position="328"/>
        <end position="345"/>
    </location>
</feature>
<feature type="modified residue" description="Pentaglycyl murein peptidoglycan amidated threonine" evidence="2">
    <location>
        <position position="452"/>
    </location>
</feature>
<proteinExistence type="evidence at protein level"/>
<name>M6B_STRPY</name>
<keyword id="KW-0134">Cell wall</keyword>
<keyword id="KW-0175">Coiled coil</keyword>
<keyword id="KW-0572">Peptidoglycan-anchor</keyword>
<keyword id="KW-0581">Phagocytosis</keyword>
<keyword id="KW-0677">Repeat</keyword>
<keyword id="KW-0964">Secreted</keyword>
<keyword id="KW-0732">Signal</keyword>
<keyword id="KW-0843">Virulence</keyword>